<gene>
    <name evidence="1" type="primary">prmA</name>
    <name type="ordered locus">Patl_0092</name>
</gene>
<feature type="chain" id="PRO_1000046063" description="Ribosomal protein L11 methyltransferase">
    <location>
        <begin position="1"/>
        <end position="292"/>
    </location>
</feature>
<feature type="binding site" evidence="1">
    <location>
        <position position="145"/>
    </location>
    <ligand>
        <name>S-adenosyl-L-methionine</name>
        <dbReference type="ChEBI" id="CHEBI:59789"/>
    </ligand>
</feature>
<feature type="binding site" evidence="1">
    <location>
        <position position="166"/>
    </location>
    <ligand>
        <name>S-adenosyl-L-methionine</name>
        <dbReference type="ChEBI" id="CHEBI:59789"/>
    </ligand>
</feature>
<feature type="binding site" evidence="1">
    <location>
        <position position="188"/>
    </location>
    <ligand>
        <name>S-adenosyl-L-methionine</name>
        <dbReference type="ChEBI" id="CHEBI:59789"/>
    </ligand>
</feature>
<feature type="binding site" evidence="1">
    <location>
        <position position="229"/>
    </location>
    <ligand>
        <name>S-adenosyl-L-methionine</name>
        <dbReference type="ChEBI" id="CHEBI:59789"/>
    </ligand>
</feature>
<name>PRMA_PSEA6</name>
<organism>
    <name type="scientific">Pseudoalteromonas atlantica (strain T6c / ATCC BAA-1087)</name>
    <dbReference type="NCBI Taxonomy" id="3042615"/>
    <lineage>
        <taxon>Bacteria</taxon>
        <taxon>Pseudomonadati</taxon>
        <taxon>Pseudomonadota</taxon>
        <taxon>Gammaproteobacteria</taxon>
        <taxon>Alteromonadales</taxon>
        <taxon>Alteromonadaceae</taxon>
        <taxon>Paraglaciecola</taxon>
    </lineage>
</organism>
<dbReference type="EC" id="2.1.1.-" evidence="1"/>
<dbReference type="EMBL" id="CP000388">
    <property type="protein sequence ID" value="ABG38624.1"/>
    <property type="molecule type" value="Genomic_DNA"/>
</dbReference>
<dbReference type="RefSeq" id="WP_011573033.1">
    <property type="nucleotide sequence ID" value="NC_008228.1"/>
</dbReference>
<dbReference type="SMR" id="Q15ZR4"/>
<dbReference type="STRING" id="342610.Patl_0092"/>
<dbReference type="KEGG" id="pat:Patl_0092"/>
<dbReference type="eggNOG" id="COG2264">
    <property type="taxonomic scope" value="Bacteria"/>
</dbReference>
<dbReference type="HOGENOM" id="CLU_049382_4_1_6"/>
<dbReference type="OrthoDB" id="9785995at2"/>
<dbReference type="Proteomes" id="UP000001981">
    <property type="component" value="Chromosome"/>
</dbReference>
<dbReference type="GO" id="GO:0005829">
    <property type="term" value="C:cytosol"/>
    <property type="evidence" value="ECO:0007669"/>
    <property type="project" value="TreeGrafter"/>
</dbReference>
<dbReference type="GO" id="GO:0016279">
    <property type="term" value="F:protein-lysine N-methyltransferase activity"/>
    <property type="evidence" value="ECO:0007669"/>
    <property type="project" value="TreeGrafter"/>
</dbReference>
<dbReference type="GO" id="GO:0032259">
    <property type="term" value="P:methylation"/>
    <property type="evidence" value="ECO:0007669"/>
    <property type="project" value="UniProtKB-KW"/>
</dbReference>
<dbReference type="CDD" id="cd02440">
    <property type="entry name" value="AdoMet_MTases"/>
    <property type="match status" value="1"/>
</dbReference>
<dbReference type="Gene3D" id="3.40.50.150">
    <property type="entry name" value="Vaccinia Virus protein VP39"/>
    <property type="match status" value="1"/>
</dbReference>
<dbReference type="HAMAP" id="MF_00735">
    <property type="entry name" value="Methyltr_PrmA"/>
    <property type="match status" value="1"/>
</dbReference>
<dbReference type="InterPro" id="IPR050078">
    <property type="entry name" value="Ribosomal_L11_MeTrfase_PrmA"/>
</dbReference>
<dbReference type="InterPro" id="IPR004498">
    <property type="entry name" value="Ribosomal_PrmA_MeTrfase"/>
</dbReference>
<dbReference type="InterPro" id="IPR029063">
    <property type="entry name" value="SAM-dependent_MTases_sf"/>
</dbReference>
<dbReference type="NCBIfam" id="TIGR00406">
    <property type="entry name" value="prmA"/>
    <property type="match status" value="1"/>
</dbReference>
<dbReference type="PANTHER" id="PTHR43648">
    <property type="entry name" value="ELECTRON TRANSFER FLAVOPROTEIN BETA SUBUNIT LYSINE METHYLTRANSFERASE"/>
    <property type="match status" value="1"/>
</dbReference>
<dbReference type="PANTHER" id="PTHR43648:SF1">
    <property type="entry name" value="ELECTRON TRANSFER FLAVOPROTEIN BETA SUBUNIT LYSINE METHYLTRANSFERASE"/>
    <property type="match status" value="1"/>
</dbReference>
<dbReference type="Pfam" id="PF06325">
    <property type="entry name" value="PrmA"/>
    <property type="match status" value="1"/>
</dbReference>
<dbReference type="PIRSF" id="PIRSF000401">
    <property type="entry name" value="RPL11_MTase"/>
    <property type="match status" value="1"/>
</dbReference>
<dbReference type="SUPFAM" id="SSF53335">
    <property type="entry name" value="S-adenosyl-L-methionine-dependent methyltransferases"/>
    <property type="match status" value="1"/>
</dbReference>
<keyword id="KW-0963">Cytoplasm</keyword>
<keyword id="KW-0489">Methyltransferase</keyword>
<keyword id="KW-0949">S-adenosyl-L-methionine</keyword>
<keyword id="KW-0808">Transferase</keyword>
<protein>
    <recommendedName>
        <fullName evidence="1">Ribosomal protein L11 methyltransferase</fullName>
        <shortName evidence="1">L11 Mtase</shortName>
        <ecNumber evidence="1">2.1.1.-</ecNumber>
    </recommendedName>
</protein>
<sequence>MPWIQLIIDTKAKYAEQVGDMLSANGAQAVTFVDAKDTPMYEPKPGEVMLWPETQVMGLYEADYDMDGVVARMSKSKVLGADFPHKLDQLEDKDWEREWMDNFHPMRFGQRLWICPSWRDVPDPSAVNVMLDPGLAFGTGTHPTTALCLRWLDALELSDKLVVDFGCGSGILGIAAIKLGAKRVVGIDIDPQALLSSQTNADRNHIGDKIELYLPEHQPELKADVVLANILAGPLRDLREVITAYCKSGGKLVLSGILAEQAQGINDLYSQDFHMEPIEIDGEWARVSGKRK</sequence>
<proteinExistence type="inferred from homology"/>
<accession>Q15ZR4</accession>
<evidence type="ECO:0000255" key="1">
    <source>
        <dbReference type="HAMAP-Rule" id="MF_00735"/>
    </source>
</evidence>
<comment type="function">
    <text evidence="1">Methylates ribosomal protein L11.</text>
</comment>
<comment type="catalytic activity">
    <reaction evidence="1">
        <text>L-lysyl-[protein] + 3 S-adenosyl-L-methionine = N(6),N(6),N(6)-trimethyl-L-lysyl-[protein] + 3 S-adenosyl-L-homocysteine + 3 H(+)</text>
        <dbReference type="Rhea" id="RHEA:54192"/>
        <dbReference type="Rhea" id="RHEA-COMP:9752"/>
        <dbReference type="Rhea" id="RHEA-COMP:13826"/>
        <dbReference type="ChEBI" id="CHEBI:15378"/>
        <dbReference type="ChEBI" id="CHEBI:29969"/>
        <dbReference type="ChEBI" id="CHEBI:57856"/>
        <dbReference type="ChEBI" id="CHEBI:59789"/>
        <dbReference type="ChEBI" id="CHEBI:61961"/>
    </reaction>
</comment>
<comment type="subcellular location">
    <subcellularLocation>
        <location evidence="1">Cytoplasm</location>
    </subcellularLocation>
</comment>
<comment type="similarity">
    <text evidence="1">Belongs to the methyltransferase superfamily. PrmA family.</text>
</comment>
<reference key="1">
    <citation type="submission" date="2006-06" db="EMBL/GenBank/DDBJ databases">
        <title>Complete sequence of Pseudoalteromonas atlantica T6c.</title>
        <authorList>
            <consortium name="US DOE Joint Genome Institute"/>
            <person name="Copeland A."/>
            <person name="Lucas S."/>
            <person name="Lapidus A."/>
            <person name="Barry K."/>
            <person name="Detter J.C."/>
            <person name="Glavina del Rio T."/>
            <person name="Hammon N."/>
            <person name="Israni S."/>
            <person name="Dalin E."/>
            <person name="Tice H."/>
            <person name="Pitluck S."/>
            <person name="Saunders E."/>
            <person name="Brettin T."/>
            <person name="Bruce D."/>
            <person name="Han C."/>
            <person name="Tapia R."/>
            <person name="Gilna P."/>
            <person name="Schmutz J."/>
            <person name="Larimer F."/>
            <person name="Land M."/>
            <person name="Hauser L."/>
            <person name="Kyrpides N."/>
            <person name="Kim E."/>
            <person name="Karls A.C."/>
            <person name="Bartlett D."/>
            <person name="Higgins B.P."/>
            <person name="Richardson P."/>
        </authorList>
    </citation>
    <scope>NUCLEOTIDE SEQUENCE [LARGE SCALE GENOMIC DNA]</scope>
    <source>
        <strain>T6c / ATCC BAA-1087</strain>
    </source>
</reference>